<keyword id="KW-0496">Mitochondrion</keyword>
<geneLocation type="mitochondrion"/>
<reference key="1">
    <citation type="journal article" date="1992" name="J. Mol. Biol.">
        <title>Gene organization deduced from the complete sequence of liverwort Marchantia polymorpha mitochondrial DNA. A primitive form of plant mitochondrial genome.</title>
        <authorList>
            <person name="Oda K."/>
            <person name="Yamato K."/>
            <person name="Ohta E."/>
            <person name="Nakamura Y."/>
            <person name="Takemura M."/>
            <person name="Nozato N."/>
            <person name="Akashi K."/>
            <person name="Kanegae T."/>
            <person name="Ogura Y."/>
            <person name="Kohchi T."/>
            <person name="Ohyama K."/>
        </authorList>
    </citation>
    <scope>NUCLEOTIDE SEQUENCE [GENOMIC DNA]</scope>
</reference>
<sequence length="139" mass="16208">MDKYKIFDVDRNNGIGARSAIMGLYHHPSMVHRGTFYEKGCPVTPDHDKYCIYFIIYTPEPLIIRTLTAHFVSGARPREWFLGGWCSTPRHIGIGQHSVLANRGVRILSLFLFFEVLAYYPFGFFSWPNSWSNQKWFLI</sequence>
<dbReference type="EMBL" id="M68929">
    <property type="protein sequence ID" value="AAC09409.1"/>
    <property type="molecule type" value="Genomic_DNA"/>
</dbReference>
<dbReference type="PIR" id="S25970">
    <property type="entry name" value="S25970"/>
</dbReference>
<dbReference type="GO" id="GO:0005739">
    <property type="term" value="C:mitochondrion"/>
    <property type="evidence" value="ECO:0007669"/>
    <property type="project" value="UniProtKB-SubCell"/>
</dbReference>
<gene>
    <name type="primary">YMF28</name>
</gene>
<name>YMF28_MARPO</name>
<feature type="chain" id="PRO_0000196855" description="Uncharacterized mitochondrial protein ymf28">
    <location>
        <begin position="1"/>
        <end position="139"/>
    </location>
</feature>
<accession>P38470</accession>
<organism>
    <name type="scientific">Marchantia polymorpha</name>
    <name type="common">Common liverwort</name>
    <name type="synonym">Marchantia aquatica</name>
    <dbReference type="NCBI Taxonomy" id="3197"/>
    <lineage>
        <taxon>Eukaryota</taxon>
        <taxon>Viridiplantae</taxon>
        <taxon>Streptophyta</taxon>
        <taxon>Embryophyta</taxon>
        <taxon>Marchantiophyta</taxon>
        <taxon>Marchantiopsida</taxon>
        <taxon>Marchantiidae</taxon>
        <taxon>Marchantiales</taxon>
        <taxon>Marchantiaceae</taxon>
        <taxon>Marchantia</taxon>
    </lineage>
</organism>
<comment type="subcellular location">
    <subcellularLocation>
        <location evidence="1">Mitochondrion</location>
    </subcellularLocation>
</comment>
<evidence type="ECO:0000305" key="1"/>
<protein>
    <recommendedName>
        <fullName>Uncharacterized mitochondrial protein ymf28</fullName>
    </recommendedName>
    <alternativeName>
        <fullName>ORF139</fullName>
    </alternativeName>
</protein>
<proteinExistence type="predicted"/>